<dbReference type="EC" id="7.1.1.-" evidence="1"/>
<dbReference type="EMBL" id="CP000949">
    <property type="protein sequence ID" value="ACA72376.1"/>
    <property type="molecule type" value="Genomic_DNA"/>
</dbReference>
<dbReference type="SMR" id="B1J6N4"/>
<dbReference type="STRING" id="390235.PputW619_1873"/>
<dbReference type="KEGG" id="ppw:PputW619_1873"/>
<dbReference type="eggNOG" id="COG0838">
    <property type="taxonomic scope" value="Bacteria"/>
</dbReference>
<dbReference type="HOGENOM" id="CLU_119549_2_1_6"/>
<dbReference type="OrthoDB" id="9791970at2"/>
<dbReference type="GO" id="GO:0030964">
    <property type="term" value="C:NADH dehydrogenase complex"/>
    <property type="evidence" value="ECO:0007669"/>
    <property type="project" value="TreeGrafter"/>
</dbReference>
<dbReference type="GO" id="GO:0005886">
    <property type="term" value="C:plasma membrane"/>
    <property type="evidence" value="ECO:0007669"/>
    <property type="project" value="UniProtKB-SubCell"/>
</dbReference>
<dbReference type="GO" id="GO:0008137">
    <property type="term" value="F:NADH dehydrogenase (ubiquinone) activity"/>
    <property type="evidence" value="ECO:0007669"/>
    <property type="project" value="InterPro"/>
</dbReference>
<dbReference type="GO" id="GO:0050136">
    <property type="term" value="F:NADH:ubiquinone reductase (non-electrogenic) activity"/>
    <property type="evidence" value="ECO:0007669"/>
    <property type="project" value="UniProtKB-UniRule"/>
</dbReference>
<dbReference type="GO" id="GO:0048038">
    <property type="term" value="F:quinone binding"/>
    <property type="evidence" value="ECO:0007669"/>
    <property type="project" value="UniProtKB-KW"/>
</dbReference>
<dbReference type="FunFam" id="1.20.58.1610:FF:000003">
    <property type="entry name" value="NADH-quinone oxidoreductase subunit A"/>
    <property type="match status" value="1"/>
</dbReference>
<dbReference type="Gene3D" id="1.20.58.1610">
    <property type="entry name" value="NADH:ubiquinone/plastoquinone oxidoreductase, chain 3"/>
    <property type="match status" value="1"/>
</dbReference>
<dbReference type="HAMAP" id="MF_01394">
    <property type="entry name" value="NDH1_NuoA"/>
    <property type="match status" value="1"/>
</dbReference>
<dbReference type="InterPro" id="IPR023043">
    <property type="entry name" value="NAD(P)H_OxRDtase_bac/plastid"/>
</dbReference>
<dbReference type="InterPro" id="IPR000440">
    <property type="entry name" value="NADH_UbQ/plastoQ_OxRdtase_su3"/>
</dbReference>
<dbReference type="InterPro" id="IPR038430">
    <property type="entry name" value="NDAH_ubi_oxred_su3_sf"/>
</dbReference>
<dbReference type="PANTHER" id="PTHR11058:SF21">
    <property type="entry name" value="NADH-QUINONE OXIDOREDUCTASE SUBUNIT A"/>
    <property type="match status" value="1"/>
</dbReference>
<dbReference type="PANTHER" id="PTHR11058">
    <property type="entry name" value="NADH-UBIQUINONE OXIDOREDUCTASE CHAIN 3"/>
    <property type="match status" value="1"/>
</dbReference>
<dbReference type="Pfam" id="PF00507">
    <property type="entry name" value="Oxidored_q4"/>
    <property type="match status" value="1"/>
</dbReference>
<feature type="chain" id="PRO_0000362744" description="NADH-quinone oxidoreductase subunit A">
    <location>
        <begin position="1"/>
        <end position="137"/>
    </location>
</feature>
<feature type="transmembrane region" description="Helical" evidence="1">
    <location>
        <begin position="12"/>
        <end position="32"/>
    </location>
</feature>
<feature type="transmembrane region" description="Helical" evidence="1">
    <location>
        <begin position="66"/>
        <end position="86"/>
    </location>
</feature>
<feature type="transmembrane region" description="Helical" evidence="1">
    <location>
        <begin position="95"/>
        <end position="115"/>
    </location>
</feature>
<evidence type="ECO:0000255" key="1">
    <source>
        <dbReference type="HAMAP-Rule" id="MF_01394"/>
    </source>
</evidence>
<accession>B1J6N4</accession>
<organism>
    <name type="scientific">Pseudomonas putida (strain W619)</name>
    <dbReference type="NCBI Taxonomy" id="390235"/>
    <lineage>
        <taxon>Bacteria</taxon>
        <taxon>Pseudomonadati</taxon>
        <taxon>Pseudomonadota</taxon>
        <taxon>Gammaproteobacteria</taxon>
        <taxon>Pseudomonadales</taxon>
        <taxon>Pseudomonadaceae</taxon>
        <taxon>Pseudomonas</taxon>
    </lineage>
</organism>
<name>NUOA_PSEPW</name>
<protein>
    <recommendedName>
        <fullName evidence="1">NADH-quinone oxidoreductase subunit A</fullName>
        <ecNumber evidence="1">7.1.1.-</ecNumber>
    </recommendedName>
    <alternativeName>
        <fullName evidence="1">NADH dehydrogenase I subunit A</fullName>
    </alternativeName>
    <alternativeName>
        <fullName evidence="1">NDH-1 subunit A</fullName>
    </alternativeName>
    <alternativeName>
        <fullName evidence="1">NUO1</fullName>
    </alternativeName>
</protein>
<proteinExistence type="inferred from homology"/>
<comment type="function">
    <text evidence="1">NDH-1 shuttles electrons from NADH, via FMN and iron-sulfur (Fe-S) centers, to quinones in the respiratory chain. The immediate electron acceptor for the enzyme in this species is believed to be ubiquinone. Couples the redox reaction to proton translocation (for every two electrons transferred, four hydrogen ions are translocated across the cytoplasmic membrane), and thus conserves the redox energy in a proton gradient.</text>
</comment>
<comment type="catalytic activity">
    <reaction evidence="1">
        <text>a quinone + NADH + 5 H(+)(in) = a quinol + NAD(+) + 4 H(+)(out)</text>
        <dbReference type="Rhea" id="RHEA:57888"/>
        <dbReference type="ChEBI" id="CHEBI:15378"/>
        <dbReference type="ChEBI" id="CHEBI:24646"/>
        <dbReference type="ChEBI" id="CHEBI:57540"/>
        <dbReference type="ChEBI" id="CHEBI:57945"/>
        <dbReference type="ChEBI" id="CHEBI:132124"/>
    </reaction>
</comment>
<comment type="subunit">
    <text evidence="1">NDH-1 is composed of 13 different subunits. Subunits NuoA, H, J, K, L, M, N constitute the membrane sector of the complex.</text>
</comment>
<comment type="subcellular location">
    <subcellularLocation>
        <location evidence="1">Cell inner membrane</location>
        <topology evidence="1">Multi-pass membrane protein</topology>
    </subcellularLocation>
</comment>
<comment type="similarity">
    <text evidence="1">Belongs to the complex I subunit 3 family.</text>
</comment>
<keyword id="KW-0997">Cell inner membrane</keyword>
<keyword id="KW-1003">Cell membrane</keyword>
<keyword id="KW-0472">Membrane</keyword>
<keyword id="KW-0520">NAD</keyword>
<keyword id="KW-0874">Quinone</keyword>
<keyword id="KW-1278">Translocase</keyword>
<keyword id="KW-0812">Transmembrane</keyword>
<keyword id="KW-1133">Transmembrane helix</keyword>
<keyword id="KW-0813">Transport</keyword>
<keyword id="KW-0830">Ubiquinone</keyword>
<gene>
    <name evidence="1" type="primary">nuoA</name>
    <name type="ordered locus">PputW619_1873</name>
</gene>
<sequence>MSDSAGLIAHNWGFAIFLLGVVGLCAFMLGLSSLLGSKAWGRAKNEPFESGMLPVGSARLRLSAKFYLVAMLFVIFDIEALFLFAWSVSVRESGWTGFVEALVFIAILLAGLVYLWRVGALDWAPEGRRKRQAKLKQ</sequence>
<reference key="1">
    <citation type="submission" date="2008-02" db="EMBL/GenBank/DDBJ databases">
        <title>Complete sequence of Pseudomonas putida W619.</title>
        <authorList>
            <person name="Copeland A."/>
            <person name="Lucas S."/>
            <person name="Lapidus A."/>
            <person name="Barry K."/>
            <person name="Detter J.C."/>
            <person name="Glavina del Rio T."/>
            <person name="Dalin E."/>
            <person name="Tice H."/>
            <person name="Pitluck S."/>
            <person name="Chain P."/>
            <person name="Malfatti S."/>
            <person name="Shin M."/>
            <person name="Vergez L."/>
            <person name="Schmutz J."/>
            <person name="Larimer F."/>
            <person name="Land M."/>
            <person name="Hauser L."/>
            <person name="Kyrpides N."/>
            <person name="Kim E."/>
            <person name="Taghavi S."/>
            <person name="Vangronsveld D."/>
            <person name="van der Lelie D."/>
            <person name="Richardson P."/>
        </authorList>
    </citation>
    <scope>NUCLEOTIDE SEQUENCE [LARGE SCALE GENOMIC DNA]</scope>
    <source>
        <strain>W619</strain>
    </source>
</reference>